<accession>Q99SN8</accession>
<dbReference type="EMBL" id="BA000017">
    <property type="protein sequence ID" value="BAB58166.1"/>
    <property type="molecule type" value="Genomic_DNA"/>
</dbReference>
<dbReference type="SMR" id="Q99SN8"/>
<dbReference type="KEGG" id="sav:SAV2004"/>
<dbReference type="HOGENOM" id="CLU_055394_0_1_9"/>
<dbReference type="PhylomeDB" id="Q99SN8"/>
<dbReference type="Proteomes" id="UP000002481">
    <property type="component" value="Chromosome"/>
</dbReference>
<dbReference type="GO" id="GO:0005576">
    <property type="term" value="C:extracellular region"/>
    <property type="evidence" value="ECO:0007669"/>
    <property type="project" value="InterPro"/>
</dbReference>
<dbReference type="GO" id="GO:0051715">
    <property type="term" value="P:cytolysis in another organism"/>
    <property type="evidence" value="ECO:0007669"/>
    <property type="project" value="InterPro"/>
</dbReference>
<dbReference type="Gene3D" id="2.70.240.10">
    <property type="entry name" value="Leukocidin/porin MspA"/>
    <property type="match status" value="1"/>
</dbReference>
<dbReference type="InterPro" id="IPR003963">
    <property type="entry name" value="Bi-component_toxin_staph"/>
</dbReference>
<dbReference type="InterPro" id="IPR016183">
    <property type="entry name" value="Leukocidin/Hemolysin_toxin"/>
</dbReference>
<dbReference type="InterPro" id="IPR036435">
    <property type="entry name" value="Leukocidin/porin_MspA_sf"/>
</dbReference>
<dbReference type="NCBIfam" id="TIGR01002">
    <property type="entry name" value="hlyII"/>
    <property type="match status" value="1"/>
</dbReference>
<dbReference type="Pfam" id="PF07968">
    <property type="entry name" value="Leukocidin"/>
    <property type="match status" value="1"/>
</dbReference>
<dbReference type="PRINTS" id="PR01468">
    <property type="entry name" value="BICOMPNTOXIN"/>
</dbReference>
<dbReference type="SUPFAM" id="SSF56959">
    <property type="entry name" value="Leukocidin-like"/>
    <property type="match status" value="1"/>
</dbReference>
<keyword id="KW-0732">Signal</keyword>
<sequence>MIKQLYKNITICSLAISTALTVFPATSYAKINSEIKAVSEKNLDGDTKMYTRTATTSDSQKNITQSLQFNFLTEPNYDKETVFIKAKGTIGSGLRILDPNGYWNSTLRWPGSYSVSIQNVDDNNNTNVTDFAPKNQDESREVKYTYGYKTGGDFSINRGGLTGNITKESNYSETISYQQPSYRTLLDQSTSHKGVGWKVEAHLINNMGHDHTRQLTNDSDNRTKSEIFSLTRNGNLWAKDNFTPKDKMPVTVSEGFNPEFLAVMSHDKKDKGKSQFVVHYKRSMDEFKIDWNRHGFWGYWSGENHVDKKEEKLSALYEVDWKTHDVKFVKVLNDNEKK</sequence>
<comment type="similarity">
    <text evidence="2">Belongs to the aerolysin family.</text>
</comment>
<evidence type="ECO:0000255" key="1"/>
<evidence type="ECO:0000305" key="2"/>
<organism>
    <name type="scientific">Staphylococcus aureus (strain Mu50 / ATCC 700699)</name>
    <dbReference type="NCBI Taxonomy" id="158878"/>
    <lineage>
        <taxon>Bacteria</taxon>
        <taxon>Bacillati</taxon>
        <taxon>Bacillota</taxon>
        <taxon>Bacilli</taxon>
        <taxon>Bacillales</taxon>
        <taxon>Staphylococcaceae</taxon>
        <taxon>Staphylococcus</taxon>
    </lineage>
</organism>
<reference key="1">
    <citation type="journal article" date="2001" name="Lancet">
        <title>Whole genome sequencing of meticillin-resistant Staphylococcus aureus.</title>
        <authorList>
            <person name="Kuroda M."/>
            <person name="Ohta T."/>
            <person name="Uchiyama I."/>
            <person name="Baba T."/>
            <person name="Yuzawa H."/>
            <person name="Kobayashi I."/>
            <person name="Cui L."/>
            <person name="Oguchi A."/>
            <person name="Aoki K."/>
            <person name="Nagai Y."/>
            <person name="Lian J.-Q."/>
            <person name="Ito T."/>
            <person name="Kanamori M."/>
            <person name="Matsumaru H."/>
            <person name="Maruyama A."/>
            <person name="Murakami H."/>
            <person name="Hosoyama A."/>
            <person name="Mizutani-Ui Y."/>
            <person name="Takahashi N.K."/>
            <person name="Sawano T."/>
            <person name="Inoue R."/>
            <person name="Kaito C."/>
            <person name="Sekimizu K."/>
            <person name="Hirakawa H."/>
            <person name="Kuhara S."/>
            <person name="Goto S."/>
            <person name="Yabuzaki J."/>
            <person name="Kanehisa M."/>
            <person name="Yamashita A."/>
            <person name="Oshima K."/>
            <person name="Furuya K."/>
            <person name="Yoshino C."/>
            <person name="Shiba T."/>
            <person name="Hattori M."/>
            <person name="Ogasawara N."/>
            <person name="Hayashi H."/>
            <person name="Hiramatsu K."/>
        </authorList>
    </citation>
    <scope>NUCLEOTIDE SEQUENCE [LARGE SCALE GENOMIC DNA]</scope>
    <source>
        <strain>Mu50 / ATCC 700699</strain>
    </source>
</reference>
<protein>
    <recommendedName>
        <fullName>Uncharacterized leukocidin-like protein 1</fullName>
    </recommendedName>
</protein>
<feature type="signal peptide" evidence="1">
    <location>
        <begin position="1"/>
        <end position="29"/>
    </location>
</feature>
<feature type="chain" id="PRO_0000298634" description="Uncharacterized leukocidin-like protein 1">
    <location>
        <begin position="30"/>
        <end position="338"/>
    </location>
</feature>
<name>LUKL1_STAAM</name>
<gene>
    <name type="ordered locus">SAV2004</name>
</gene>
<proteinExistence type="inferred from homology"/>